<accession>Q1MPQ8</accession>
<feature type="chain" id="PRO_1000052596" description="Large ribosomal subunit protein uL22">
    <location>
        <begin position="1"/>
        <end position="112"/>
    </location>
</feature>
<gene>
    <name evidence="1" type="primary">rplV</name>
    <name type="ordered locus">LI0965</name>
</gene>
<evidence type="ECO:0000255" key="1">
    <source>
        <dbReference type="HAMAP-Rule" id="MF_01331"/>
    </source>
</evidence>
<evidence type="ECO:0000305" key="2"/>
<organism>
    <name type="scientific">Lawsonia intracellularis (strain PHE/MN1-00)</name>
    <dbReference type="NCBI Taxonomy" id="363253"/>
    <lineage>
        <taxon>Bacteria</taxon>
        <taxon>Pseudomonadati</taxon>
        <taxon>Thermodesulfobacteriota</taxon>
        <taxon>Desulfovibrionia</taxon>
        <taxon>Desulfovibrionales</taxon>
        <taxon>Desulfovibrionaceae</taxon>
        <taxon>Lawsonia</taxon>
    </lineage>
</organism>
<protein>
    <recommendedName>
        <fullName evidence="1">Large ribosomal subunit protein uL22</fullName>
    </recommendedName>
    <alternativeName>
        <fullName evidence="2">50S ribosomal protein L22</fullName>
    </alternativeName>
</protein>
<reference key="1">
    <citation type="submission" date="2005-11" db="EMBL/GenBank/DDBJ databases">
        <title>The complete genome sequence of Lawsonia intracellularis: the causative agent of proliferative enteropathy.</title>
        <authorList>
            <person name="Kaur K."/>
            <person name="Zhang Q."/>
            <person name="Beckler D."/>
            <person name="Munir S."/>
            <person name="Li L."/>
            <person name="Kinsley K."/>
            <person name="Herron L."/>
            <person name="Peterson A."/>
            <person name="May B."/>
            <person name="Singh S."/>
            <person name="Gebhart C."/>
            <person name="Kapur V."/>
        </authorList>
    </citation>
    <scope>NUCLEOTIDE SEQUENCE [LARGE SCALE GENOMIC DNA]</scope>
    <source>
        <strain>PHE/MN1-00</strain>
    </source>
</reference>
<comment type="function">
    <text evidence="1">This protein binds specifically to 23S rRNA; its binding is stimulated by other ribosomal proteins, e.g. L4, L17, and L20. It is important during the early stages of 50S assembly. It makes multiple contacts with different domains of the 23S rRNA in the assembled 50S subunit and ribosome (By similarity).</text>
</comment>
<comment type="function">
    <text evidence="1">The globular domain of the protein is located near the polypeptide exit tunnel on the outside of the subunit, while an extended beta-hairpin is found that lines the wall of the exit tunnel in the center of the 70S ribosome.</text>
</comment>
<comment type="subunit">
    <text evidence="1">Part of the 50S ribosomal subunit.</text>
</comment>
<comment type="similarity">
    <text evidence="1">Belongs to the universal ribosomal protein uL22 family.</text>
</comment>
<keyword id="KW-1185">Reference proteome</keyword>
<keyword id="KW-0687">Ribonucleoprotein</keyword>
<keyword id="KW-0689">Ribosomal protein</keyword>
<keyword id="KW-0694">RNA-binding</keyword>
<keyword id="KW-0699">rRNA-binding</keyword>
<dbReference type="EMBL" id="AM180252">
    <property type="protein sequence ID" value="CAJ55019.1"/>
    <property type="molecule type" value="Genomic_DNA"/>
</dbReference>
<dbReference type="RefSeq" id="WP_011527048.1">
    <property type="nucleotide sequence ID" value="NC_008011.1"/>
</dbReference>
<dbReference type="SMR" id="Q1MPQ8"/>
<dbReference type="STRING" id="363253.LI0965"/>
<dbReference type="KEGG" id="lip:LI0965"/>
<dbReference type="eggNOG" id="COG0091">
    <property type="taxonomic scope" value="Bacteria"/>
</dbReference>
<dbReference type="HOGENOM" id="CLU_083987_3_3_7"/>
<dbReference type="OrthoDB" id="9805969at2"/>
<dbReference type="Proteomes" id="UP000002430">
    <property type="component" value="Chromosome"/>
</dbReference>
<dbReference type="GO" id="GO:0022625">
    <property type="term" value="C:cytosolic large ribosomal subunit"/>
    <property type="evidence" value="ECO:0007669"/>
    <property type="project" value="TreeGrafter"/>
</dbReference>
<dbReference type="GO" id="GO:0019843">
    <property type="term" value="F:rRNA binding"/>
    <property type="evidence" value="ECO:0007669"/>
    <property type="project" value="UniProtKB-UniRule"/>
</dbReference>
<dbReference type="GO" id="GO:0003735">
    <property type="term" value="F:structural constituent of ribosome"/>
    <property type="evidence" value="ECO:0007669"/>
    <property type="project" value="InterPro"/>
</dbReference>
<dbReference type="GO" id="GO:0006412">
    <property type="term" value="P:translation"/>
    <property type="evidence" value="ECO:0007669"/>
    <property type="project" value="UniProtKB-UniRule"/>
</dbReference>
<dbReference type="CDD" id="cd00336">
    <property type="entry name" value="Ribosomal_L22"/>
    <property type="match status" value="1"/>
</dbReference>
<dbReference type="Gene3D" id="3.90.470.10">
    <property type="entry name" value="Ribosomal protein L22/L17"/>
    <property type="match status" value="1"/>
</dbReference>
<dbReference type="HAMAP" id="MF_01331_B">
    <property type="entry name" value="Ribosomal_uL22_B"/>
    <property type="match status" value="1"/>
</dbReference>
<dbReference type="InterPro" id="IPR001063">
    <property type="entry name" value="Ribosomal_uL22"/>
</dbReference>
<dbReference type="InterPro" id="IPR005727">
    <property type="entry name" value="Ribosomal_uL22_bac/chlpt-type"/>
</dbReference>
<dbReference type="InterPro" id="IPR047867">
    <property type="entry name" value="Ribosomal_uL22_bac/org-type"/>
</dbReference>
<dbReference type="InterPro" id="IPR018260">
    <property type="entry name" value="Ribosomal_uL22_CS"/>
</dbReference>
<dbReference type="InterPro" id="IPR036394">
    <property type="entry name" value="Ribosomal_uL22_sf"/>
</dbReference>
<dbReference type="NCBIfam" id="TIGR01044">
    <property type="entry name" value="rplV_bact"/>
    <property type="match status" value="1"/>
</dbReference>
<dbReference type="PANTHER" id="PTHR13501">
    <property type="entry name" value="CHLOROPLAST 50S RIBOSOMAL PROTEIN L22-RELATED"/>
    <property type="match status" value="1"/>
</dbReference>
<dbReference type="PANTHER" id="PTHR13501:SF8">
    <property type="entry name" value="LARGE RIBOSOMAL SUBUNIT PROTEIN UL22M"/>
    <property type="match status" value="1"/>
</dbReference>
<dbReference type="Pfam" id="PF00237">
    <property type="entry name" value="Ribosomal_L22"/>
    <property type="match status" value="1"/>
</dbReference>
<dbReference type="SUPFAM" id="SSF54843">
    <property type="entry name" value="Ribosomal protein L22"/>
    <property type="match status" value="1"/>
</dbReference>
<dbReference type="PROSITE" id="PS00464">
    <property type="entry name" value="RIBOSOMAL_L22"/>
    <property type="match status" value="1"/>
</dbReference>
<proteinExistence type="inferred from homology"/>
<name>RL22_LAWIP</name>
<sequence length="112" mass="12364">MESKACAKFIRVSPRKARLIASNVKGKTVELAMNILKFTPNKSAGIILGVMRSALANAEHNAKLDVDTLIVKEVIVNEGPTWKRFMPRAQGRATHIRKRSSHISVVLSEGQE</sequence>